<sequence>MAEAKTGAKATKSAAAGAADGASKEKGPKHTPSTPKPRGRRKTRIGYVVSDKMQKTIVVELEDRVRHPLYGKIIRTTKKVKVHDEHSAAGIGDRVSLMETRPLSATKRWRLVEILEKAK</sequence>
<organism>
    <name type="scientific">Mycobacterium marinum (strain ATCC BAA-535 / M)</name>
    <dbReference type="NCBI Taxonomy" id="216594"/>
    <lineage>
        <taxon>Bacteria</taxon>
        <taxon>Bacillati</taxon>
        <taxon>Actinomycetota</taxon>
        <taxon>Actinomycetes</taxon>
        <taxon>Mycobacteriales</taxon>
        <taxon>Mycobacteriaceae</taxon>
        <taxon>Mycobacterium</taxon>
        <taxon>Mycobacterium ulcerans group</taxon>
    </lineage>
</organism>
<comment type="function">
    <text evidence="1">One of the primary rRNA binding proteins, it binds specifically to the 5'-end of 16S ribosomal RNA.</text>
</comment>
<comment type="subunit">
    <text evidence="1">Part of the 30S ribosomal subunit.</text>
</comment>
<comment type="similarity">
    <text evidence="1">Belongs to the universal ribosomal protein uS17 family.</text>
</comment>
<proteinExistence type="inferred from homology"/>
<accession>B2HSP0</accession>
<protein>
    <recommendedName>
        <fullName evidence="1">Small ribosomal subunit protein uS17</fullName>
    </recommendedName>
    <alternativeName>
        <fullName evidence="3">30S ribosomal protein S17</fullName>
    </alternativeName>
</protein>
<gene>
    <name evidence="1" type="primary">rpsQ</name>
    <name type="ordered locus">MMAR_1040</name>
</gene>
<reference key="1">
    <citation type="journal article" date="2008" name="Genome Res.">
        <title>Insights from the complete genome sequence of Mycobacterium marinum on the evolution of Mycobacterium tuberculosis.</title>
        <authorList>
            <person name="Stinear T.P."/>
            <person name="Seemann T."/>
            <person name="Harrison P.F."/>
            <person name="Jenkin G.A."/>
            <person name="Davies J.K."/>
            <person name="Johnson P.D."/>
            <person name="Abdellah Z."/>
            <person name="Arrowsmith C."/>
            <person name="Chillingworth T."/>
            <person name="Churcher C."/>
            <person name="Clarke K."/>
            <person name="Cronin A."/>
            <person name="Davis P."/>
            <person name="Goodhead I."/>
            <person name="Holroyd N."/>
            <person name="Jagels K."/>
            <person name="Lord A."/>
            <person name="Moule S."/>
            <person name="Mungall K."/>
            <person name="Norbertczak H."/>
            <person name="Quail M.A."/>
            <person name="Rabbinowitsch E."/>
            <person name="Walker D."/>
            <person name="White B."/>
            <person name="Whitehead S."/>
            <person name="Small P.L."/>
            <person name="Brosch R."/>
            <person name="Ramakrishnan L."/>
            <person name="Fischbach M.A."/>
            <person name="Parkhill J."/>
            <person name="Cole S.T."/>
        </authorList>
    </citation>
    <scope>NUCLEOTIDE SEQUENCE [LARGE SCALE GENOMIC DNA]</scope>
    <source>
        <strain>ATCC BAA-535 / M</strain>
    </source>
</reference>
<feature type="chain" id="PRO_1000143274" description="Small ribosomal subunit protein uS17">
    <location>
        <begin position="1"/>
        <end position="119"/>
    </location>
</feature>
<feature type="region of interest" description="Disordered" evidence="2">
    <location>
        <begin position="1"/>
        <end position="44"/>
    </location>
</feature>
<feature type="compositionally biased region" description="Low complexity" evidence="2">
    <location>
        <begin position="1"/>
        <end position="21"/>
    </location>
</feature>
<name>RS17_MYCMM</name>
<keyword id="KW-1185">Reference proteome</keyword>
<keyword id="KW-0687">Ribonucleoprotein</keyword>
<keyword id="KW-0689">Ribosomal protein</keyword>
<keyword id="KW-0694">RNA-binding</keyword>
<keyword id="KW-0699">rRNA-binding</keyword>
<dbReference type="EMBL" id="CP000854">
    <property type="protein sequence ID" value="ACC39498.1"/>
    <property type="molecule type" value="Genomic_DNA"/>
</dbReference>
<dbReference type="SMR" id="B2HSP0"/>
<dbReference type="STRING" id="216594.MMAR_1040"/>
<dbReference type="KEGG" id="mmi:MMAR_1040"/>
<dbReference type="eggNOG" id="COG0186">
    <property type="taxonomic scope" value="Bacteria"/>
</dbReference>
<dbReference type="HOGENOM" id="CLU_073626_1_0_11"/>
<dbReference type="Proteomes" id="UP000001190">
    <property type="component" value="Chromosome"/>
</dbReference>
<dbReference type="GO" id="GO:0022627">
    <property type="term" value="C:cytosolic small ribosomal subunit"/>
    <property type="evidence" value="ECO:0007669"/>
    <property type="project" value="TreeGrafter"/>
</dbReference>
<dbReference type="GO" id="GO:0019843">
    <property type="term" value="F:rRNA binding"/>
    <property type="evidence" value="ECO:0007669"/>
    <property type="project" value="UniProtKB-UniRule"/>
</dbReference>
<dbReference type="GO" id="GO:0003735">
    <property type="term" value="F:structural constituent of ribosome"/>
    <property type="evidence" value="ECO:0007669"/>
    <property type="project" value="InterPro"/>
</dbReference>
<dbReference type="GO" id="GO:0006412">
    <property type="term" value="P:translation"/>
    <property type="evidence" value="ECO:0007669"/>
    <property type="project" value="UniProtKB-UniRule"/>
</dbReference>
<dbReference type="CDD" id="cd00364">
    <property type="entry name" value="Ribosomal_uS17"/>
    <property type="match status" value="1"/>
</dbReference>
<dbReference type="FunFam" id="2.40.50.140:FF:000026">
    <property type="entry name" value="30S ribosomal protein S17"/>
    <property type="match status" value="1"/>
</dbReference>
<dbReference type="Gene3D" id="2.40.50.140">
    <property type="entry name" value="Nucleic acid-binding proteins"/>
    <property type="match status" value="1"/>
</dbReference>
<dbReference type="HAMAP" id="MF_01345_B">
    <property type="entry name" value="Ribosomal_uS17_B"/>
    <property type="match status" value="1"/>
</dbReference>
<dbReference type="InterPro" id="IPR012340">
    <property type="entry name" value="NA-bd_OB-fold"/>
</dbReference>
<dbReference type="InterPro" id="IPR000266">
    <property type="entry name" value="Ribosomal_uS17"/>
</dbReference>
<dbReference type="InterPro" id="IPR019984">
    <property type="entry name" value="Ribosomal_uS17_bact/chlr"/>
</dbReference>
<dbReference type="InterPro" id="IPR019979">
    <property type="entry name" value="Ribosomal_uS17_CS"/>
</dbReference>
<dbReference type="NCBIfam" id="NF004123">
    <property type="entry name" value="PRK05610.1"/>
    <property type="match status" value="1"/>
</dbReference>
<dbReference type="NCBIfam" id="TIGR03635">
    <property type="entry name" value="uS17_bact"/>
    <property type="match status" value="1"/>
</dbReference>
<dbReference type="PANTHER" id="PTHR10744">
    <property type="entry name" value="40S RIBOSOMAL PROTEIN S11 FAMILY MEMBER"/>
    <property type="match status" value="1"/>
</dbReference>
<dbReference type="PANTHER" id="PTHR10744:SF1">
    <property type="entry name" value="SMALL RIBOSOMAL SUBUNIT PROTEIN US17M"/>
    <property type="match status" value="1"/>
</dbReference>
<dbReference type="Pfam" id="PF00366">
    <property type="entry name" value="Ribosomal_S17"/>
    <property type="match status" value="1"/>
</dbReference>
<dbReference type="PRINTS" id="PR00973">
    <property type="entry name" value="RIBOSOMALS17"/>
</dbReference>
<dbReference type="SUPFAM" id="SSF50249">
    <property type="entry name" value="Nucleic acid-binding proteins"/>
    <property type="match status" value="1"/>
</dbReference>
<dbReference type="PROSITE" id="PS00056">
    <property type="entry name" value="RIBOSOMAL_S17"/>
    <property type="match status" value="1"/>
</dbReference>
<evidence type="ECO:0000255" key="1">
    <source>
        <dbReference type="HAMAP-Rule" id="MF_01345"/>
    </source>
</evidence>
<evidence type="ECO:0000256" key="2">
    <source>
        <dbReference type="SAM" id="MobiDB-lite"/>
    </source>
</evidence>
<evidence type="ECO:0000305" key="3"/>